<reference key="1">
    <citation type="journal article" date="2005" name="Jpn. Agric. Res. Q.">
        <title>Genome sequence of Xanthomonas oryzae pv. oryzae suggests contribution of large numbers of effector genes and insertion sequences to its race diversity.</title>
        <authorList>
            <person name="Ochiai H."/>
            <person name="Inoue Y."/>
            <person name="Takeya M."/>
            <person name="Sasaki A."/>
            <person name="Kaku H."/>
        </authorList>
    </citation>
    <scope>NUCLEOTIDE SEQUENCE [LARGE SCALE GENOMIC DNA]</scope>
    <source>
        <strain>MAFF 311018</strain>
    </source>
</reference>
<sequence length="673" mass="76075">MTDRFQLVSPYSPAGDQPAAIDKLVANFEAGLAKQTLLGVTGSGKTYTIANVVQQVQKPTLVMAPNKTLAAQLYGEFKSFFPHNAVEYFVSYYDYYQPEAYVPSSDTFIEKDSSINEHIEQMRLSATKTLLSRRDSLVVATVSAIYGLGAPEDYLSLRLILSIGEHIDQRQLIRHLTDLQYTRNEFELTRGAFRVRGEVLDVFPAESDTEALRIELFDGDIEQLTLFDPLTGETLRKLQRYTVYPKTHYATTRERTLSAVDTIKEELKERLEQLYSQSKLVEAQRLAQRTQFDLEMMAEVGFCNGIENYSRHLTGKAPGEPPPTLFDYLPPDALLVIDESHVTIPQIGAMYKGDRSRKETLVEFGFRLPSALDNRPLRFEEWEARSPRSIYVSATPGPYELRESAGEVTELVVRPTGLIDPVVEIRPVGMQVDDLMSEIHERIKLGDRVLVTTLTKRMAENLTEYLGEHGIRVRYLHSDIDTVERVEIIRDLRLGKFDVLVGINLLREGLDMPEVSLVAILDADKEGFLRSTGSLIQTIGRAARNLRGKAILYADKMTRSMQAAIDESDRRREKQVEYNLEHGITPESVERPISDIMEGAREDAAEKKSGKGRSKSRQVAEETPDYRAMKPAEIAGKLKSLEQKMYQHAKDLEFEAAAQIRDQIQKLKTASLA</sequence>
<proteinExistence type="inferred from homology"/>
<organism>
    <name type="scientific">Xanthomonas oryzae pv. oryzae (strain MAFF 311018)</name>
    <dbReference type="NCBI Taxonomy" id="342109"/>
    <lineage>
        <taxon>Bacteria</taxon>
        <taxon>Pseudomonadati</taxon>
        <taxon>Pseudomonadota</taxon>
        <taxon>Gammaproteobacteria</taxon>
        <taxon>Lysobacterales</taxon>
        <taxon>Lysobacteraceae</taxon>
        <taxon>Xanthomonas</taxon>
    </lineage>
</organism>
<feature type="chain" id="PRO_1000077942" description="UvrABC system protein B">
    <location>
        <begin position="1"/>
        <end position="673"/>
    </location>
</feature>
<feature type="domain" description="Helicase ATP-binding" evidence="1">
    <location>
        <begin position="26"/>
        <end position="183"/>
    </location>
</feature>
<feature type="domain" description="Helicase C-terminal" evidence="1">
    <location>
        <begin position="431"/>
        <end position="597"/>
    </location>
</feature>
<feature type="domain" description="UVR" evidence="1">
    <location>
        <begin position="635"/>
        <end position="670"/>
    </location>
</feature>
<feature type="region of interest" description="Disordered" evidence="2">
    <location>
        <begin position="601"/>
        <end position="631"/>
    </location>
</feature>
<feature type="short sequence motif" description="Beta-hairpin">
    <location>
        <begin position="92"/>
        <end position="115"/>
    </location>
</feature>
<feature type="compositionally biased region" description="Basic and acidic residues" evidence="2">
    <location>
        <begin position="618"/>
        <end position="630"/>
    </location>
</feature>
<feature type="binding site" evidence="1">
    <location>
        <begin position="39"/>
        <end position="46"/>
    </location>
    <ligand>
        <name>ATP</name>
        <dbReference type="ChEBI" id="CHEBI:30616"/>
    </ligand>
</feature>
<comment type="function">
    <text evidence="1">The UvrABC repair system catalyzes the recognition and processing of DNA lesions. A damage recognition complex composed of 2 UvrA and 2 UvrB subunits scans DNA for abnormalities. Upon binding of the UvrA(2)B(2) complex to a putative damaged site, the DNA wraps around one UvrB monomer. DNA wrap is dependent on ATP binding by UvrB and probably causes local melting of the DNA helix, facilitating insertion of UvrB beta-hairpin between the DNA strands. Then UvrB probes one DNA strand for the presence of a lesion. If a lesion is found the UvrA subunits dissociate and the UvrB-DNA preincision complex is formed. This complex is subsequently bound by UvrC and the second UvrB is released. If no lesion is found, the DNA wraps around the other UvrB subunit that will check the other stand for damage.</text>
</comment>
<comment type="subunit">
    <text evidence="1">Forms a heterotetramer with UvrA during the search for lesions. Interacts with UvrC in an incision complex.</text>
</comment>
<comment type="subcellular location">
    <subcellularLocation>
        <location evidence="1">Cytoplasm</location>
    </subcellularLocation>
</comment>
<comment type="domain">
    <text evidence="1">The beta-hairpin motif is involved in DNA binding.</text>
</comment>
<comment type="similarity">
    <text evidence="1">Belongs to the UvrB family.</text>
</comment>
<dbReference type="EMBL" id="AP008229">
    <property type="protein sequence ID" value="BAE69784.1"/>
    <property type="molecule type" value="Genomic_DNA"/>
</dbReference>
<dbReference type="RefSeq" id="WP_011409045.1">
    <property type="nucleotide sequence ID" value="NC_007705.1"/>
</dbReference>
<dbReference type="SMR" id="Q2P0Z3"/>
<dbReference type="KEGG" id="xom:XOO3029"/>
<dbReference type="HOGENOM" id="CLU_009621_2_1_6"/>
<dbReference type="GO" id="GO:0005737">
    <property type="term" value="C:cytoplasm"/>
    <property type="evidence" value="ECO:0007669"/>
    <property type="project" value="UniProtKB-SubCell"/>
</dbReference>
<dbReference type="GO" id="GO:0009380">
    <property type="term" value="C:excinuclease repair complex"/>
    <property type="evidence" value="ECO:0007669"/>
    <property type="project" value="InterPro"/>
</dbReference>
<dbReference type="GO" id="GO:0005524">
    <property type="term" value="F:ATP binding"/>
    <property type="evidence" value="ECO:0007669"/>
    <property type="project" value="UniProtKB-UniRule"/>
</dbReference>
<dbReference type="GO" id="GO:0016887">
    <property type="term" value="F:ATP hydrolysis activity"/>
    <property type="evidence" value="ECO:0007669"/>
    <property type="project" value="InterPro"/>
</dbReference>
<dbReference type="GO" id="GO:0003677">
    <property type="term" value="F:DNA binding"/>
    <property type="evidence" value="ECO:0007669"/>
    <property type="project" value="UniProtKB-UniRule"/>
</dbReference>
<dbReference type="GO" id="GO:0009381">
    <property type="term" value="F:excinuclease ABC activity"/>
    <property type="evidence" value="ECO:0007669"/>
    <property type="project" value="UniProtKB-UniRule"/>
</dbReference>
<dbReference type="GO" id="GO:0004386">
    <property type="term" value="F:helicase activity"/>
    <property type="evidence" value="ECO:0007669"/>
    <property type="project" value="UniProtKB-KW"/>
</dbReference>
<dbReference type="GO" id="GO:0006289">
    <property type="term" value="P:nucleotide-excision repair"/>
    <property type="evidence" value="ECO:0007669"/>
    <property type="project" value="UniProtKB-UniRule"/>
</dbReference>
<dbReference type="GO" id="GO:0009432">
    <property type="term" value="P:SOS response"/>
    <property type="evidence" value="ECO:0007669"/>
    <property type="project" value="UniProtKB-UniRule"/>
</dbReference>
<dbReference type="CDD" id="cd17916">
    <property type="entry name" value="DEXHc_UvrB"/>
    <property type="match status" value="1"/>
</dbReference>
<dbReference type="CDD" id="cd18790">
    <property type="entry name" value="SF2_C_UvrB"/>
    <property type="match status" value="1"/>
</dbReference>
<dbReference type="FunFam" id="3.40.50.300:FF:000477">
    <property type="entry name" value="UvrABC system protein B"/>
    <property type="match status" value="1"/>
</dbReference>
<dbReference type="Gene3D" id="6.10.140.240">
    <property type="match status" value="1"/>
</dbReference>
<dbReference type="Gene3D" id="3.40.50.300">
    <property type="entry name" value="P-loop containing nucleotide triphosphate hydrolases"/>
    <property type="match status" value="3"/>
</dbReference>
<dbReference type="Gene3D" id="4.10.860.10">
    <property type="entry name" value="UVR domain"/>
    <property type="match status" value="1"/>
</dbReference>
<dbReference type="HAMAP" id="MF_00204">
    <property type="entry name" value="UvrB"/>
    <property type="match status" value="1"/>
</dbReference>
<dbReference type="InterPro" id="IPR006935">
    <property type="entry name" value="Helicase/UvrB_N"/>
</dbReference>
<dbReference type="InterPro" id="IPR014001">
    <property type="entry name" value="Helicase_ATP-bd"/>
</dbReference>
<dbReference type="InterPro" id="IPR001650">
    <property type="entry name" value="Helicase_C-like"/>
</dbReference>
<dbReference type="InterPro" id="IPR027417">
    <property type="entry name" value="P-loop_NTPase"/>
</dbReference>
<dbReference type="InterPro" id="IPR001943">
    <property type="entry name" value="UVR_dom"/>
</dbReference>
<dbReference type="InterPro" id="IPR036876">
    <property type="entry name" value="UVR_dom_sf"/>
</dbReference>
<dbReference type="InterPro" id="IPR004807">
    <property type="entry name" value="UvrB"/>
</dbReference>
<dbReference type="InterPro" id="IPR041471">
    <property type="entry name" value="UvrB_inter"/>
</dbReference>
<dbReference type="InterPro" id="IPR024759">
    <property type="entry name" value="UvrB_YAD/RRR_dom"/>
</dbReference>
<dbReference type="NCBIfam" id="NF003673">
    <property type="entry name" value="PRK05298.1"/>
    <property type="match status" value="1"/>
</dbReference>
<dbReference type="NCBIfam" id="TIGR00631">
    <property type="entry name" value="uvrb"/>
    <property type="match status" value="1"/>
</dbReference>
<dbReference type="PANTHER" id="PTHR24029">
    <property type="entry name" value="UVRABC SYSTEM PROTEIN B"/>
    <property type="match status" value="1"/>
</dbReference>
<dbReference type="PANTHER" id="PTHR24029:SF0">
    <property type="entry name" value="UVRABC SYSTEM PROTEIN B"/>
    <property type="match status" value="1"/>
</dbReference>
<dbReference type="Pfam" id="PF00271">
    <property type="entry name" value="Helicase_C"/>
    <property type="match status" value="1"/>
</dbReference>
<dbReference type="Pfam" id="PF04851">
    <property type="entry name" value="ResIII"/>
    <property type="match status" value="1"/>
</dbReference>
<dbReference type="Pfam" id="PF02151">
    <property type="entry name" value="UVR"/>
    <property type="match status" value="1"/>
</dbReference>
<dbReference type="Pfam" id="PF12344">
    <property type="entry name" value="UvrB"/>
    <property type="match status" value="1"/>
</dbReference>
<dbReference type="Pfam" id="PF17757">
    <property type="entry name" value="UvrB_inter"/>
    <property type="match status" value="1"/>
</dbReference>
<dbReference type="SMART" id="SM00487">
    <property type="entry name" value="DEXDc"/>
    <property type="match status" value="1"/>
</dbReference>
<dbReference type="SMART" id="SM00490">
    <property type="entry name" value="HELICc"/>
    <property type="match status" value="1"/>
</dbReference>
<dbReference type="SUPFAM" id="SSF46600">
    <property type="entry name" value="C-terminal UvrC-binding domain of UvrB"/>
    <property type="match status" value="1"/>
</dbReference>
<dbReference type="SUPFAM" id="SSF52540">
    <property type="entry name" value="P-loop containing nucleoside triphosphate hydrolases"/>
    <property type="match status" value="2"/>
</dbReference>
<dbReference type="PROSITE" id="PS51192">
    <property type="entry name" value="HELICASE_ATP_BIND_1"/>
    <property type="match status" value="1"/>
</dbReference>
<dbReference type="PROSITE" id="PS51194">
    <property type="entry name" value="HELICASE_CTER"/>
    <property type="match status" value="1"/>
</dbReference>
<dbReference type="PROSITE" id="PS50151">
    <property type="entry name" value="UVR"/>
    <property type="match status" value="1"/>
</dbReference>
<protein>
    <recommendedName>
        <fullName evidence="1">UvrABC system protein B</fullName>
        <shortName evidence="1">Protein UvrB</shortName>
    </recommendedName>
    <alternativeName>
        <fullName evidence="1">Excinuclease ABC subunit B</fullName>
    </alternativeName>
</protein>
<accession>Q2P0Z3</accession>
<evidence type="ECO:0000255" key="1">
    <source>
        <dbReference type="HAMAP-Rule" id="MF_00204"/>
    </source>
</evidence>
<evidence type="ECO:0000256" key="2">
    <source>
        <dbReference type="SAM" id="MobiDB-lite"/>
    </source>
</evidence>
<name>UVRB_XANOM</name>
<keyword id="KW-0067">ATP-binding</keyword>
<keyword id="KW-0963">Cytoplasm</keyword>
<keyword id="KW-0227">DNA damage</keyword>
<keyword id="KW-0228">DNA excision</keyword>
<keyword id="KW-0234">DNA repair</keyword>
<keyword id="KW-0267">Excision nuclease</keyword>
<keyword id="KW-0347">Helicase</keyword>
<keyword id="KW-0378">Hydrolase</keyword>
<keyword id="KW-0547">Nucleotide-binding</keyword>
<keyword id="KW-0742">SOS response</keyword>
<gene>
    <name evidence="1" type="primary">uvrB</name>
    <name type="ordered locus">XOO3029</name>
</gene>